<feature type="chain" id="PRO_0000091190" description="Elongation factor G 2">
    <location>
        <begin position="1"/>
        <end position="700"/>
    </location>
</feature>
<feature type="domain" description="tr-type G">
    <location>
        <begin position="8"/>
        <end position="290"/>
    </location>
</feature>
<feature type="binding site" evidence="1">
    <location>
        <begin position="17"/>
        <end position="24"/>
    </location>
    <ligand>
        <name>GTP</name>
        <dbReference type="ChEBI" id="CHEBI:37565"/>
    </ligand>
</feature>
<feature type="binding site" evidence="1">
    <location>
        <begin position="88"/>
        <end position="92"/>
    </location>
    <ligand>
        <name>GTP</name>
        <dbReference type="ChEBI" id="CHEBI:37565"/>
    </ligand>
</feature>
<feature type="binding site" evidence="1">
    <location>
        <begin position="142"/>
        <end position="145"/>
    </location>
    <ligand>
        <name>GTP</name>
        <dbReference type="ChEBI" id="CHEBI:37565"/>
    </ligand>
</feature>
<gene>
    <name type="primary">fusB</name>
    <name type="synonym">fusA2</name>
    <name type="ordered locus">RSp0804</name>
    <name type="ORF">RS06124</name>
</gene>
<keyword id="KW-0963">Cytoplasm</keyword>
<keyword id="KW-0251">Elongation factor</keyword>
<keyword id="KW-0342">GTP-binding</keyword>
<keyword id="KW-0547">Nucleotide-binding</keyword>
<keyword id="KW-0614">Plasmid</keyword>
<keyword id="KW-0648">Protein biosynthesis</keyword>
<keyword id="KW-1185">Reference proteome</keyword>
<organism>
    <name type="scientific">Ralstonia nicotianae (strain ATCC BAA-1114 / GMI1000)</name>
    <name type="common">Ralstonia solanacearum</name>
    <dbReference type="NCBI Taxonomy" id="267608"/>
    <lineage>
        <taxon>Bacteria</taxon>
        <taxon>Pseudomonadati</taxon>
        <taxon>Pseudomonadota</taxon>
        <taxon>Betaproteobacteria</taxon>
        <taxon>Burkholderiales</taxon>
        <taxon>Burkholderiaceae</taxon>
        <taxon>Ralstonia</taxon>
        <taxon>Ralstonia solanacearum species complex</taxon>
    </lineage>
</organism>
<proteinExistence type="inferred from homology"/>
<geneLocation type="plasmid">
    <name>megaplasmid Rsp</name>
</geneLocation>
<dbReference type="EMBL" id="AL646053">
    <property type="protein sequence ID" value="CAD17955.1"/>
    <property type="molecule type" value="Genomic_DNA"/>
</dbReference>
<dbReference type="RefSeq" id="WP_011004102.1">
    <property type="nucleotide sequence ID" value="NC_003296.1"/>
</dbReference>
<dbReference type="SMR" id="Q8XRM7"/>
<dbReference type="STRING" id="267608.RSp0804"/>
<dbReference type="EnsemblBacteria" id="CAD17955">
    <property type="protein sequence ID" value="CAD17955"/>
    <property type="gene ID" value="RSp0804"/>
</dbReference>
<dbReference type="KEGG" id="rso:RSp0804"/>
<dbReference type="PATRIC" id="fig|267608.8.peg.4271"/>
<dbReference type="eggNOG" id="COG0480">
    <property type="taxonomic scope" value="Bacteria"/>
</dbReference>
<dbReference type="HOGENOM" id="CLU_002794_4_1_4"/>
<dbReference type="Proteomes" id="UP000001436">
    <property type="component" value="Plasmid megaplasmid Rsp"/>
</dbReference>
<dbReference type="GO" id="GO:0005737">
    <property type="term" value="C:cytoplasm"/>
    <property type="evidence" value="ECO:0007669"/>
    <property type="project" value="UniProtKB-SubCell"/>
</dbReference>
<dbReference type="GO" id="GO:0005525">
    <property type="term" value="F:GTP binding"/>
    <property type="evidence" value="ECO:0007669"/>
    <property type="project" value="UniProtKB-UniRule"/>
</dbReference>
<dbReference type="GO" id="GO:0003924">
    <property type="term" value="F:GTPase activity"/>
    <property type="evidence" value="ECO:0007669"/>
    <property type="project" value="InterPro"/>
</dbReference>
<dbReference type="GO" id="GO:0097216">
    <property type="term" value="F:guanosine tetraphosphate binding"/>
    <property type="evidence" value="ECO:0007669"/>
    <property type="project" value="UniProtKB-ARBA"/>
</dbReference>
<dbReference type="GO" id="GO:0003746">
    <property type="term" value="F:translation elongation factor activity"/>
    <property type="evidence" value="ECO:0007669"/>
    <property type="project" value="UniProtKB-UniRule"/>
</dbReference>
<dbReference type="GO" id="GO:0032790">
    <property type="term" value="P:ribosome disassembly"/>
    <property type="evidence" value="ECO:0007669"/>
    <property type="project" value="TreeGrafter"/>
</dbReference>
<dbReference type="CDD" id="cd01886">
    <property type="entry name" value="EF-G"/>
    <property type="match status" value="1"/>
</dbReference>
<dbReference type="CDD" id="cd16262">
    <property type="entry name" value="EFG_III"/>
    <property type="match status" value="1"/>
</dbReference>
<dbReference type="CDD" id="cd01434">
    <property type="entry name" value="EFG_mtEFG1_IV"/>
    <property type="match status" value="1"/>
</dbReference>
<dbReference type="CDD" id="cd03713">
    <property type="entry name" value="EFG_mtEFG_C"/>
    <property type="match status" value="1"/>
</dbReference>
<dbReference type="CDD" id="cd04088">
    <property type="entry name" value="EFG_mtEFG_II"/>
    <property type="match status" value="1"/>
</dbReference>
<dbReference type="FunFam" id="2.40.30.10:FF:000006">
    <property type="entry name" value="Elongation factor G"/>
    <property type="match status" value="1"/>
</dbReference>
<dbReference type="FunFam" id="3.30.230.10:FF:000003">
    <property type="entry name" value="Elongation factor G"/>
    <property type="match status" value="1"/>
</dbReference>
<dbReference type="FunFam" id="3.30.70.240:FF:000001">
    <property type="entry name" value="Elongation factor G"/>
    <property type="match status" value="1"/>
</dbReference>
<dbReference type="FunFam" id="3.30.70.870:FF:000001">
    <property type="entry name" value="Elongation factor G"/>
    <property type="match status" value="1"/>
</dbReference>
<dbReference type="FunFam" id="3.40.50.300:FF:000029">
    <property type="entry name" value="Elongation factor G"/>
    <property type="match status" value="1"/>
</dbReference>
<dbReference type="Gene3D" id="3.30.230.10">
    <property type="match status" value="1"/>
</dbReference>
<dbReference type="Gene3D" id="3.30.70.240">
    <property type="match status" value="1"/>
</dbReference>
<dbReference type="Gene3D" id="3.30.70.870">
    <property type="entry name" value="Elongation Factor G (Translational Gtpase), domain 3"/>
    <property type="match status" value="1"/>
</dbReference>
<dbReference type="Gene3D" id="3.40.50.300">
    <property type="entry name" value="P-loop containing nucleotide triphosphate hydrolases"/>
    <property type="match status" value="1"/>
</dbReference>
<dbReference type="Gene3D" id="2.40.30.10">
    <property type="entry name" value="Translation factors"/>
    <property type="match status" value="1"/>
</dbReference>
<dbReference type="HAMAP" id="MF_00054_B">
    <property type="entry name" value="EF_G_EF_2_B"/>
    <property type="match status" value="1"/>
</dbReference>
<dbReference type="InterPro" id="IPR041095">
    <property type="entry name" value="EFG_II"/>
</dbReference>
<dbReference type="InterPro" id="IPR009022">
    <property type="entry name" value="EFG_III"/>
</dbReference>
<dbReference type="InterPro" id="IPR035647">
    <property type="entry name" value="EFG_III/V"/>
</dbReference>
<dbReference type="InterPro" id="IPR047872">
    <property type="entry name" value="EFG_IV"/>
</dbReference>
<dbReference type="InterPro" id="IPR035649">
    <property type="entry name" value="EFG_V"/>
</dbReference>
<dbReference type="InterPro" id="IPR000640">
    <property type="entry name" value="EFG_V-like"/>
</dbReference>
<dbReference type="InterPro" id="IPR004161">
    <property type="entry name" value="EFTu-like_2"/>
</dbReference>
<dbReference type="InterPro" id="IPR031157">
    <property type="entry name" value="G_TR_CS"/>
</dbReference>
<dbReference type="InterPro" id="IPR027417">
    <property type="entry name" value="P-loop_NTPase"/>
</dbReference>
<dbReference type="InterPro" id="IPR020568">
    <property type="entry name" value="Ribosomal_Su5_D2-typ_SF"/>
</dbReference>
<dbReference type="InterPro" id="IPR014721">
    <property type="entry name" value="Ribsml_uS5_D2-typ_fold_subgr"/>
</dbReference>
<dbReference type="InterPro" id="IPR005225">
    <property type="entry name" value="Small_GTP-bd"/>
</dbReference>
<dbReference type="InterPro" id="IPR000795">
    <property type="entry name" value="T_Tr_GTP-bd_dom"/>
</dbReference>
<dbReference type="InterPro" id="IPR009000">
    <property type="entry name" value="Transl_B-barrel_sf"/>
</dbReference>
<dbReference type="InterPro" id="IPR004540">
    <property type="entry name" value="Transl_elong_EFG/EF2"/>
</dbReference>
<dbReference type="InterPro" id="IPR005517">
    <property type="entry name" value="Transl_elong_EFG/EF2_IV"/>
</dbReference>
<dbReference type="NCBIfam" id="TIGR00484">
    <property type="entry name" value="EF-G"/>
    <property type="match status" value="1"/>
</dbReference>
<dbReference type="NCBIfam" id="NF009381">
    <property type="entry name" value="PRK12740.1-5"/>
    <property type="match status" value="1"/>
</dbReference>
<dbReference type="NCBIfam" id="TIGR00231">
    <property type="entry name" value="small_GTP"/>
    <property type="match status" value="1"/>
</dbReference>
<dbReference type="PANTHER" id="PTHR43261:SF1">
    <property type="entry name" value="RIBOSOME-RELEASING FACTOR 2, MITOCHONDRIAL"/>
    <property type="match status" value="1"/>
</dbReference>
<dbReference type="PANTHER" id="PTHR43261">
    <property type="entry name" value="TRANSLATION ELONGATION FACTOR G-RELATED"/>
    <property type="match status" value="1"/>
</dbReference>
<dbReference type="Pfam" id="PF00679">
    <property type="entry name" value="EFG_C"/>
    <property type="match status" value="1"/>
</dbReference>
<dbReference type="Pfam" id="PF14492">
    <property type="entry name" value="EFG_III"/>
    <property type="match status" value="1"/>
</dbReference>
<dbReference type="Pfam" id="PF03764">
    <property type="entry name" value="EFG_IV"/>
    <property type="match status" value="1"/>
</dbReference>
<dbReference type="Pfam" id="PF00009">
    <property type="entry name" value="GTP_EFTU"/>
    <property type="match status" value="1"/>
</dbReference>
<dbReference type="Pfam" id="PF03144">
    <property type="entry name" value="GTP_EFTU_D2"/>
    <property type="match status" value="1"/>
</dbReference>
<dbReference type="PRINTS" id="PR00315">
    <property type="entry name" value="ELONGATNFCT"/>
</dbReference>
<dbReference type="SMART" id="SM00838">
    <property type="entry name" value="EFG_C"/>
    <property type="match status" value="1"/>
</dbReference>
<dbReference type="SMART" id="SM00889">
    <property type="entry name" value="EFG_IV"/>
    <property type="match status" value="1"/>
</dbReference>
<dbReference type="SUPFAM" id="SSF54980">
    <property type="entry name" value="EF-G C-terminal domain-like"/>
    <property type="match status" value="2"/>
</dbReference>
<dbReference type="SUPFAM" id="SSF52540">
    <property type="entry name" value="P-loop containing nucleoside triphosphate hydrolases"/>
    <property type="match status" value="1"/>
</dbReference>
<dbReference type="SUPFAM" id="SSF54211">
    <property type="entry name" value="Ribosomal protein S5 domain 2-like"/>
    <property type="match status" value="1"/>
</dbReference>
<dbReference type="SUPFAM" id="SSF50447">
    <property type="entry name" value="Translation proteins"/>
    <property type="match status" value="1"/>
</dbReference>
<dbReference type="PROSITE" id="PS00301">
    <property type="entry name" value="G_TR_1"/>
    <property type="match status" value="1"/>
</dbReference>
<dbReference type="PROSITE" id="PS51722">
    <property type="entry name" value="G_TR_2"/>
    <property type="match status" value="1"/>
</dbReference>
<protein>
    <recommendedName>
        <fullName evidence="1">Elongation factor G 2</fullName>
        <shortName evidence="1">EF-G 2</shortName>
    </recommendedName>
</protein>
<reference key="1">
    <citation type="journal article" date="2002" name="Nature">
        <title>Genome sequence of the plant pathogen Ralstonia solanacearum.</title>
        <authorList>
            <person name="Salanoubat M."/>
            <person name="Genin S."/>
            <person name="Artiguenave F."/>
            <person name="Gouzy J."/>
            <person name="Mangenot S."/>
            <person name="Arlat M."/>
            <person name="Billault A."/>
            <person name="Brottier P."/>
            <person name="Camus J.-C."/>
            <person name="Cattolico L."/>
            <person name="Chandler M."/>
            <person name="Choisne N."/>
            <person name="Claudel-Renard C."/>
            <person name="Cunnac S."/>
            <person name="Demange N."/>
            <person name="Gaspin C."/>
            <person name="Lavie M."/>
            <person name="Moisan A."/>
            <person name="Robert C."/>
            <person name="Saurin W."/>
            <person name="Schiex T."/>
            <person name="Siguier P."/>
            <person name="Thebault P."/>
            <person name="Whalen M."/>
            <person name="Wincker P."/>
            <person name="Levy M."/>
            <person name="Weissenbach J."/>
            <person name="Boucher C.A."/>
        </authorList>
    </citation>
    <scope>NUCLEOTIDE SEQUENCE [LARGE SCALE GENOMIC DNA]</scope>
    <source>
        <strain>ATCC BAA-1114 / GMI1000</strain>
    </source>
</reference>
<evidence type="ECO:0000255" key="1">
    <source>
        <dbReference type="HAMAP-Rule" id="MF_00054"/>
    </source>
</evidence>
<accession>Q8XRM7</accession>
<name>EFG2_RALN1</name>
<sequence length="700" mass="77619">MPRQTPIERYRNIGISAHIDAGKTTTTERILFYTGVNHKIGEVHDGAATMDWMEQEQERGITITSAATHCMWRGMGGNYPEHRINIIDTPGHVDFTIEVERSMRVLDGACMVYDSVGGVQPQSETVWRQANKYKVPRIAFVNKMDRVGADFFRVERQMRERLKGNPVPVQIPVGAEDHFRGVVDLVKMKAIVWDDASQGVKFEYIDIPEELRATAQEWHDKMVEAAAEADEALLEKYLGGEALTEAEIKGALRRRTIAGEIVPMLCGSAFKNKGVQAMLDAVVDYLPSPIDIPSIQGHGEKDEPLERHANDDEPFSALAFKIMTDPFVGQLIFFRVYSGSVYSGDTVYNPVKEKKERLGRILQMHANQRVEIKDVHAGDIAAAVGLKEATTGDTLCDPDNVIILERMEFPEPVISQAVEPKTKGDQEKMGLALNRLAQEDPSFRVKTDEESGQTIISGMGELHLEILVDRMKREFGVEATVGKPQVAYRETIRKVADDVEGKFIKQSGGRGQYGHAVITLQPNPGKGYEFVDEIKGGVIPREFIPAVDKGIRDTLNAGVLAGYPVVDVKVRLTFGSYHDVDSNENAFRMAGSMAFKDAMRRADPILLEPMMAVEVETPEEYMGNVIGDLSSRRGMVQGTEDIPGGGGKVVHAEVPLAEMFGYSTNLRSLSQGRATYTMEFKHYAEAPRTVSETVISAKRA</sequence>
<comment type="function">
    <text evidence="1">Catalyzes the GTP-dependent ribosomal translocation step during translation elongation. During this step, the ribosome changes from the pre-translocational (PRE) to the post-translocational (POST) state as the newly formed A-site-bound peptidyl-tRNA and P-site-bound deacylated tRNA move to the P and E sites, respectively. Catalyzes the coordinated movement of the two tRNA molecules, the mRNA and conformational changes in the ribosome.</text>
</comment>
<comment type="subcellular location">
    <subcellularLocation>
        <location evidence="1">Cytoplasm</location>
    </subcellularLocation>
</comment>
<comment type="similarity">
    <text evidence="1">Belongs to the TRAFAC class translation factor GTPase superfamily. Classic translation factor GTPase family. EF-G/EF-2 subfamily.</text>
</comment>